<dbReference type="EMBL" id="CP000802">
    <property type="protein sequence ID" value="ABV07752.1"/>
    <property type="molecule type" value="Genomic_DNA"/>
</dbReference>
<dbReference type="RefSeq" id="WP_001138043.1">
    <property type="nucleotide sequence ID" value="NC_009800.1"/>
</dbReference>
<dbReference type="SMR" id="A8A5E8"/>
<dbReference type="GeneID" id="93778657"/>
<dbReference type="KEGG" id="ecx:EcHS_A3537"/>
<dbReference type="HOGENOM" id="CLU_072226_1_1_6"/>
<dbReference type="GO" id="GO:0015935">
    <property type="term" value="C:small ribosomal subunit"/>
    <property type="evidence" value="ECO:0007669"/>
    <property type="project" value="InterPro"/>
</dbReference>
<dbReference type="GO" id="GO:0019843">
    <property type="term" value="F:rRNA binding"/>
    <property type="evidence" value="ECO:0007669"/>
    <property type="project" value="UniProtKB-UniRule"/>
</dbReference>
<dbReference type="GO" id="GO:0003735">
    <property type="term" value="F:structural constituent of ribosome"/>
    <property type="evidence" value="ECO:0007669"/>
    <property type="project" value="InterPro"/>
</dbReference>
<dbReference type="GO" id="GO:0000049">
    <property type="term" value="F:tRNA binding"/>
    <property type="evidence" value="ECO:0007669"/>
    <property type="project" value="UniProtKB-UniRule"/>
</dbReference>
<dbReference type="GO" id="GO:0006412">
    <property type="term" value="P:translation"/>
    <property type="evidence" value="ECO:0007669"/>
    <property type="project" value="UniProtKB-UniRule"/>
</dbReference>
<dbReference type="CDD" id="cd14869">
    <property type="entry name" value="uS7_Bacteria"/>
    <property type="match status" value="1"/>
</dbReference>
<dbReference type="FunFam" id="1.10.455.10:FF:000001">
    <property type="entry name" value="30S ribosomal protein S7"/>
    <property type="match status" value="1"/>
</dbReference>
<dbReference type="Gene3D" id="1.10.455.10">
    <property type="entry name" value="Ribosomal protein S7 domain"/>
    <property type="match status" value="1"/>
</dbReference>
<dbReference type="HAMAP" id="MF_00480_B">
    <property type="entry name" value="Ribosomal_uS7_B"/>
    <property type="match status" value="1"/>
</dbReference>
<dbReference type="InterPro" id="IPR000235">
    <property type="entry name" value="Ribosomal_uS7"/>
</dbReference>
<dbReference type="InterPro" id="IPR005717">
    <property type="entry name" value="Ribosomal_uS7_bac/org-type"/>
</dbReference>
<dbReference type="InterPro" id="IPR020606">
    <property type="entry name" value="Ribosomal_uS7_CS"/>
</dbReference>
<dbReference type="InterPro" id="IPR023798">
    <property type="entry name" value="Ribosomal_uS7_dom"/>
</dbReference>
<dbReference type="InterPro" id="IPR036823">
    <property type="entry name" value="Ribosomal_uS7_dom_sf"/>
</dbReference>
<dbReference type="NCBIfam" id="TIGR01029">
    <property type="entry name" value="rpsG_bact"/>
    <property type="match status" value="1"/>
</dbReference>
<dbReference type="PANTHER" id="PTHR11205">
    <property type="entry name" value="RIBOSOMAL PROTEIN S7"/>
    <property type="match status" value="1"/>
</dbReference>
<dbReference type="Pfam" id="PF00177">
    <property type="entry name" value="Ribosomal_S7"/>
    <property type="match status" value="1"/>
</dbReference>
<dbReference type="PIRSF" id="PIRSF002122">
    <property type="entry name" value="RPS7p_RPS7a_RPS5e_RPS7o"/>
    <property type="match status" value="1"/>
</dbReference>
<dbReference type="SUPFAM" id="SSF47973">
    <property type="entry name" value="Ribosomal protein S7"/>
    <property type="match status" value="1"/>
</dbReference>
<dbReference type="PROSITE" id="PS00052">
    <property type="entry name" value="RIBOSOMAL_S7"/>
    <property type="match status" value="1"/>
</dbReference>
<gene>
    <name evidence="1" type="primary">rpsG</name>
    <name type="ordered locus">EcHS_A3537</name>
</gene>
<accession>A8A5E8</accession>
<protein>
    <recommendedName>
        <fullName evidence="1">Small ribosomal subunit protein uS7</fullName>
    </recommendedName>
    <alternativeName>
        <fullName evidence="2">30S ribosomal protein S7</fullName>
    </alternativeName>
</protein>
<name>RS7_ECOHS</name>
<keyword id="KW-0687">Ribonucleoprotein</keyword>
<keyword id="KW-0689">Ribosomal protein</keyword>
<keyword id="KW-0694">RNA-binding</keyword>
<keyword id="KW-0699">rRNA-binding</keyword>
<keyword id="KW-0820">tRNA-binding</keyword>
<evidence type="ECO:0000255" key="1">
    <source>
        <dbReference type="HAMAP-Rule" id="MF_00480"/>
    </source>
</evidence>
<evidence type="ECO:0000305" key="2"/>
<reference key="1">
    <citation type="journal article" date="2008" name="J. Bacteriol.">
        <title>The pangenome structure of Escherichia coli: comparative genomic analysis of E. coli commensal and pathogenic isolates.</title>
        <authorList>
            <person name="Rasko D.A."/>
            <person name="Rosovitz M.J."/>
            <person name="Myers G.S.A."/>
            <person name="Mongodin E.F."/>
            <person name="Fricke W.F."/>
            <person name="Gajer P."/>
            <person name="Crabtree J."/>
            <person name="Sebaihia M."/>
            <person name="Thomson N.R."/>
            <person name="Chaudhuri R."/>
            <person name="Henderson I.R."/>
            <person name="Sperandio V."/>
            <person name="Ravel J."/>
        </authorList>
    </citation>
    <scope>NUCLEOTIDE SEQUENCE [LARGE SCALE GENOMIC DNA]</scope>
    <source>
        <strain>HS</strain>
    </source>
</reference>
<comment type="function">
    <text evidence="1">One of the primary rRNA binding proteins, it binds directly to 16S rRNA where it nucleates assembly of the head domain of the 30S subunit. Is located at the subunit interface close to the decoding center, probably blocks exit of the E-site tRNA.</text>
</comment>
<comment type="subunit">
    <text evidence="1">Part of the 30S ribosomal subunit. Contacts proteins S9 and S11.</text>
</comment>
<comment type="similarity">
    <text evidence="1">Belongs to the universal ribosomal protein uS7 family.</text>
</comment>
<proteinExistence type="inferred from homology"/>
<sequence length="156" mass="17604">MPRRRVIGQRKILPDPKFGSELLAKFVNILMVDGKKSTAESIVYSALETLAQRSGKSELEAFEVALENVRPTVEVKSRRVGGSTYQVPVEVRPVRRNALAMRWIVEAARKRGDKSMALRLANELSDAAENKGTAVKKREDVHRMAEANKAFAHYRW</sequence>
<feature type="chain" id="PRO_1000060417" description="Small ribosomal subunit protein uS7">
    <location>
        <begin position="1"/>
        <end position="156"/>
    </location>
</feature>
<organism>
    <name type="scientific">Escherichia coli O9:H4 (strain HS)</name>
    <dbReference type="NCBI Taxonomy" id="331112"/>
    <lineage>
        <taxon>Bacteria</taxon>
        <taxon>Pseudomonadati</taxon>
        <taxon>Pseudomonadota</taxon>
        <taxon>Gammaproteobacteria</taxon>
        <taxon>Enterobacterales</taxon>
        <taxon>Enterobacteriaceae</taxon>
        <taxon>Escherichia</taxon>
    </lineage>
</organism>